<feature type="transit peptide" description="Mitochondrion" evidence="1">
    <location>
        <begin position="1"/>
        <end position="18"/>
    </location>
</feature>
<feature type="chain" id="PRO_0000437577" description="Glutamate dehydrogenase 1, mitochondrial">
    <location>
        <begin position="19"/>
        <end position="411"/>
    </location>
</feature>
<feature type="active site" evidence="2">
    <location>
        <position position="102"/>
    </location>
</feature>
<sequence length="411" mass="44342">MNALAATSRNFKQAAKLLGLDSKLEKSLLIPFREIKVECTIPKDDGTLASYVGFRVQHDNARGPMKGGIRYHHEVDPDEVNALAQLMTWKTAVANIPYGGAKGGIGCSPGDLSISELERLTRVFTQKIHDLIGIHTDVPAPDMGTNSQTMAWILDEYSKFHGYSPAVVTGKPVDLGGSLGRDAATGRGVLFATEALLAEHGKGIAGQRFVIQGFGNVGSWAAQLISEAGGKVIAISDVTGAVKNSNGLDIAKLMKHSSENRGIKGFDGGDAIDPRSLLTEECDVLIPAALGGVINKDNANEIKAKYIIEAANHPTDPEADEILSKKGVLILPDILANSGGVTVSYFEWVQNIQGFMWDEEKVNNELKTYMTRGFRDVKEMCRSHHCDLRMGAFTLGVNRVARATVLRGWEA</sequence>
<name>DHE1_ORYSJ</name>
<comment type="catalytic activity">
    <reaction evidence="2">
        <text>L-glutamate + NAD(+) + H2O = 2-oxoglutarate + NH4(+) + NADH + H(+)</text>
        <dbReference type="Rhea" id="RHEA:15133"/>
        <dbReference type="ChEBI" id="CHEBI:15377"/>
        <dbReference type="ChEBI" id="CHEBI:15378"/>
        <dbReference type="ChEBI" id="CHEBI:16810"/>
        <dbReference type="ChEBI" id="CHEBI:28938"/>
        <dbReference type="ChEBI" id="CHEBI:29985"/>
        <dbReference type="ChEBI" id="CHEBI:57540"/>
        <dbReference type="ChEBI" id="CHEBI:57945"/>
        <dbReference type="EC" id="1.4.1.3"/>
    </reaction>
</comment>
<comment type="catalytic activity">
    <reaction evidence="2">
        <text>L-glutamate + NADP(+) + H2O = 2-oxoglutarate + NH4(+) + NADPH + H(+)</text>
        <dbReference type="Rhea" id="RHEA:11612"/>
        <dbReference type="ChEBI" id="CHEBI:15377"/>
        <dbReference type="ChEBI" id="CHEBI:15378"/>
        <dbReference type="ChEBI" id="CHEBI:16810"/>
        <dbReference type="ChEBI" id="CHEBI:28938"/>
        <dbReference type="ChEBI" id="CHEBI:29985"/>
        <dbReference type="ChEBI" id="CHEBI:57783"/>
        <dbReference type="ChEBI" id="CHEBI:58349"/>
        <dbReference type="EC" id="1.4.1.3"/>
    </reaction>
</comment>
<comment type="subcellular location">
    <subcellularLocation>
        <location evidence="1">Mitochondrion</location>
    </subcellularLocation>
</comment>
<comment type="tissue specificity">
    <text evidence="3 4">Expressed in roots (PubMed:16120687). Expressed ubiquitously in various tissues (PubMed:19430792).</text>
</comment>
<comment type="developmental stage">
    <text evidence="3">Detected in the region of the apical meristem and cortical cells in the tip region and elongation zone of the roots.</text>
</comment>
<comment type="induction">
    <text evidence="3 4">Slightly induced by NH(4)Cl, NaNO(3) and NH(4)NO(3) (PubMed:16120687). Induced in roots after nitrogen (N-deprivation) deprivation (PubMed:19430792).</text>
</comment>
<comment type="similarity">
    <text evidence="5">Belongs to the Glu/Leu/Phe/Val dehydrogenases family.</text>
</comment>
<comment type="sequence caution" evidence="5">
    <conflict type="erroneous gene model prediction">
        <sequence resource="EMBL-CDS" id="EAZ28893"/>
    </conflict>
</comment>
<reference key="1">
    <citation type="submission" date="2003-06" db="EMBL/GenBank/DDBJ databases">
        <title>Isolation and characterization of a rice glutamate dehydrogenase.</title>
        <authorList>
            <person name="Yao Q."/>
            <person name="Peng R."/>
            <person name="Xiong A."/>
        </authorList>
    </citation>
    <scope>NUCLEOTIDE SEQUENCE [MRNA]</scope>
</reference>
<reference key="2">
    <citation type="journal article" date="2005" name="Plant Cell Physiol.">
        <title>Localization of NAD-isocitrate dehydrogenase and glutamate dehydrogenase in rice roots: candidates for providing carbon skeletons to NADH-glutamate synthase.</title>
        <authorList>
            <person name="Abiko T."/>
            <person name="Obara M."/>
            <person name="Ushioda A."/>
            <person name="Hayakawa T."/>
            <person name="Hodges M."/>
            <person name="Yamaya T."/>
        </authorList>
    </citation>
    <scope>NUCLEOTIDE SEQUENCE [MRNA]</scope>
    <scope>TISSUE SPECIFICITY</scope>
    <scope>INDUCTION BY INORGANIC NITROGEN</scope>
    <scope>DEVELOPMENTAL STAGE</scope>
    <source>
        <strain>cv. Nipponbare</strain>
        <tissue>Callus</tissue>
    </source>
</reference>
<reference key="3">
    <citation type="journal article" date="2005" name="Genome Res.">
        <title>Sequence, annotation, and analysis of synteny between rice chromosome 3 and diverged grass species.</title>
        <authorList>
            <consortium name="The rice chromosome 3 sequencing consortium"/>
            <person name="Buell C.R."/>
            <person name="Yuan Q."/>
            <person name="Ouyang S."/>
            <person name="Liu J."/>
            <person name="Zhu W."/>
            <person name="Wang A."/>
            <person name="Maiti R."/>
            <person name="Haas B."/>
            <person name="Wortman J."/>
            <person name="Pertea M."/>
            <person name="Jones K.M."/>
            <person name="Kim M."/>
            <person name="Overton L."/>
            <person name="Tsitrin T."/>
            <person name="Fadrosh D."/>
            <person name="Bera J."/>
            <person name="Weaver B."/>
            <person name="Jin S."/>
            <person name="Johri S."/>
            <person name="Reardon M."/>
            <person name="Webb K."/>
            <person name="Hill J."/>
            <person name="Moffat K."/>
            <person name="Tallon L."/>
            <person name="Van Aken S."/>
            <person name="Lewis M."/>
            <person name="Utterback T."/>
            <person name="Feldblyum T."/>
            <person name="Zismann V."/>
            <person name="Iobst S."/>
            <person name="Hsiao J."/>
            <person name="de Vazeille A.R."/>
            <person name="Salzberg S.L."/>
            <person name="White O."/>
            <person name="Fraser C.M."/>
            <person name="Yu Y."/>
            <person name="Kim H."/>
            <person name="Rambo T."/>
            <person name="Currie J."/>
            <person name="Collura K."/>
            <person name="Kernodle-Thompson S."/>
            <person name="Wei F."/>
            <person name="Kudrna K."/>
            <person name="Ammiraju J.S.S."/>
            <person name="Luo M."/>
            <person name="Goicoechea J.L."/>
            <person name="Wing R.A."/>
            <person name="Henry D."/>
            <person name="Oates R."/>
            <person name="Palmer M."/>
            <person name="Pries G."/>
            <person name="Saski C."/>
            <person name="Simmons J."/>
            <person name="Soderlund C."/>
            <person name="Nelson W."/>
            <person name="de la Bastide M."/>
            <person name="Spiegel L."/>
            <person name="Nascimento L."/>
            <person name="Huang E."/>
            <person name="Preston R."/>
            <person name="Zutavern T."/>
            <person name="Palmer L."/>
            <person name="O'Shaughnessy A."/>
            <person name="Dike S."/>
            <person name="McCombie W.R."/>
            <person name="Minx P."/>
            <person name="Cordum H."/>
            <person name="Wilson R."/>
            <person name="Jin W."/>
            <person name="Lee H.R."/>
            <person name="Jiang J."/>
            <person name="Jackson S."/>
        </authorList>
    </citation>
    <scope>NUCLEOTIDE SEQUENCE [LARGE SCALE GENOMIC DNA]</scope>
    <source>
        <strain>cv. Nipponbare</strain>
    </source>
</reference>
<reference key="4">
    <citation type="journal article" date="2005" name="Nature">
        <title>The map-based sequence of the rice genome.</title>
        <authorList>
            <consortium name="International rice genome sequencing project (IRGSP)"/>
        </authorList>
    </citation>
    <scope>NUCLEOTIDE SEQUENCE [LARGE SCALE GENOMIC DNA]</scope>
    <source>
        <strain>cv. Nipponbare</strain>
    </source>
</reference>
<reference key="5">
    <citation type="journal article" date="2008" name="Nucleic Acids Res.">
        <title>The rice annotation project database (RAP-DB): 2008 update.</title>
        <authorList>
            <consortium name="The rice annotation project (RAP)"/>
        </authorList>
    </citation>
    <scope>GENOME REANNOTATION</scope>
    <source>
        <strain>cv. Nipponbare</strain>
    </source>
</reference>
<reference key="6">
    <citation type="journal article" date="2013" name="Rice">
        <title>Improvement of the Oryza sativa Nipponbare reference genome using next generation sequence and optical map data.</title>
        <authorList>
            <person name="Kawahara Y."/>
            <person name="de la Bastide M."/>
            <person name="Hamilton J.P."/>
            <person name="Kanamori H."/>
            <person name="McCombie W.R."/>
            <person name="Ouyang S."/>
            <person name="Schwartz D.C."/>
            <person name="Tanaka T."/>
            <person name="Wu J."/>
            <person name="Zhou S."/>
            <person name="Childs K.L."/>
            <person name="Davidson R.M."/>
            <person name="Lin H."/>
            <person name="Quesada-Ocampo L."/>
            <person name="Vaillancourt B."/>
            <person name="Sakai H."/>
            <person name="Lee S.S."/>
            <person name="Kim J."/>
            <person name="Numa H."/>
            <person name="Itoh T."/>
            <person name="Buell C.R."/>
            <person name="Matsumoto T."/>
        </authorList>
    </citation>
    <scope>GENOME REANNOTATION</scope>
    <source>
        <strain>cv. Nipponbare</strain>
    </source>
</reference>
<reference key="7">
    <citation type="journal article" date="2005" name="PLoS Biol.">
        <title>The genomes of Oryza sativa: a history of duplications.</title>
        <authorList>
            <person name="Yu J."/>
            <person name="Wang J."/>
            <person name="Lin W."/>
            <person name="Li S."/>
            <person name="Li H."/>
            <person name="Zhou J."/>
            <person name="Ni P."/>
            <person name="Dong W."/>
            <person name="Hu S."/>
            <person name="Zeng C."/>
            <person name="Zhang J."/>
            <person name="Zhang Y."/>
            <person name="Li R."/>
            <person name="Xu Z."/>
            <person name="Li S."/>
            <person name="Li X."/>
            <person name="Zheng H."/>
            <person name="Cong L."/>
            <person name="Lin L."/>
            <person name="Yin J."/>
            <person name="Geng J."/>
            <person name="Li G."/>
            <person name="Shi J."/>
            <person name="Liu J."/>
            <person name="Lv H."/>
            <person name="Li J."/>
            <person name="Wang J."/>
            <person name="Deng Y."/>
            <person name="Ran L."/>
            <person name="Shi X."/>
            <person name="Wang X."/>
            <person name="Wu Q."/>
            <person name="Li C."/>
            <person name="Ren X."/>
            <person name="Wang J."/>
            <person name="Wang X."/>
            <person name="Li D."/>
            <person name="Liu D."/>
            <person name="Zhang X."/>
            <person name="Ji Z."/>
            <person name="Zhao W."/>
            <person name="Sun Y."/>
            <person name="Zhang Z."/>
            <person name="Bao J."/>
            <person name="Han Y."/>
            <person name="Dong L."/>
            <person name="Ji J."/>
            <person name="Chen P."/>
            <person name="Wu S."/>
            <person name="Liu J."/>
            <person name="Xiao Y."/>
            <person name="Bu D."/>
            <person name="Tan J."/>
            <person name="Yang L."/>
            <person name="Ye C."/>
            <person name="Zhang J."/>
            <person name="Xu J."/>
            <person name="Zhou Y."/>
            <person name="Yu Y."/>
            <person name="Zhang B."/>
            <person name="Zhuang S."/>
            <person name="Wei H."/>
            <person name="Liu B."/>
            <person name="Lei M."/>
            <person name="Yu H."/>
            <person name="Li Y."/>
            <person name="Xu H."/>
            <person name="Wei S."/>
            <person name="He X."/>
            <person name="Fang L."/>
            <person name="Zhang Z."/>
            <person name="Zhang Y."/>
            <person name="Huang X."/>
            <person name="Su Z."/>
            <person name="Tong W."/>
            <person name="Li J."/>
            <person name="Tong Z."/>
            <person name="Li S."/>
            <person name="Ye J."/>
            <person name="Wang L."/>
            <person name="Fang L."/>
            <person name="Lei T."/>
            <person name="Chen C.-S."/>
            <person name="Chen H.-C."/>
            <person name="Xu Z."/>
            <person name="Li H."/>
            <person name="Huang H."/>
            <person name="Zhang F."/>
            <person name="Xu H."/>
            <person name="Li N."/>
            <person name="Zhao C."/>
            <person name="Li S."/>
            <person name="Dong L."/>
            <person name="Huang Y."/>
            <person name="Li L."/>
            <person name="Xi Y."/>
            <person name="Qi Q."/>
            <person name="Li W."/>
            <person name="Zhang B."/>
            <person name="Hu W."/>
            <person name="Zhang Y."/>
            <person name="Tian X."/>
            <person name="Jiao Y."/>
            <person name="Liang X."/>
            <person name="Jin J."/>
            <person name="Gao L."/>
            <person name="Zheng W."/>
            <person name="Hao B."/>
            <person name="Liu S.-M."/>
            <person name="Wang W."/>
            <person name="Yuan L."/>
            <person name="Cao M."/>
            <person name="McDermott J."/>
            <person name="Samudrala R."/>
            <person name="Wang J."/>
            <person name="Wong G.K.-S."/>
            <person name="Yang H."/>
        </authorList>
    </citation>
    <scope>NUCLEOTIDE SEQUENCE [LARGE SCALE GENOMIC DNA]</scope>
    <source>
        <strain>cv. Nipponbare</strain>
    </source>
</reference>
<reference key="8">
    <citation type="journal article" date="2009" name="Plant Cell Rep.">
        <title>Molecular analyses of the rice glutamate dehydrogenase gene family and their response to nitrogen and phosphorous deprivation.</title>
        <authorList>
            <person name="Qiu X."/>
            <person name="Xie W."/>
            <person name="Lian X."/>
            <person name="Zhang Q."/>
        </authorList>
    </citation>
    <scope>TISSUE SPECIFICITY</scope>
    <scope>INDUCTION BY NITROGEN DEPRIVATION</scope>
</reference>
<organism>
    <name type="scientific">Oryza sativa subsp. japonica</name>
    <name type="common">Rice</name>
    <dbReference type="NCBI Taxonomy" id="39947"/>
    <lineage>
        <taxon>Eukaryota</taxon>
        <taxon>Viridiplantae</taxon>
        <taxon>Streptophyta</taxon>
        <taxon>Embryophyta</taxon>
        <taxon>Tracheophyta</taxon>
        <taxon>Spermatophyta</taxon>
        <taxon>Magnoliopsida</taxon>
        <taxon>Liliopsida</taxon>
        <taxon>Poales</taxon>
        <taxon>Poaceae</taxon>
        <taxon>BOP clade</taxon>
        <taxon>Oryzoideae</taxon>
        <taxon>Oryzeae</taxon>
        <taxon>Oryzinae</taxon>
        <taxon>Oryza</taxon>
        <taxon>Oryza sativa</taxon>
    </lineage>
</organism>
<accession>Q852M0</accession>
<accession>A3ANK4</accession>
<evidence type="ECO:0000255" key="1"/>
<evidence type="ECO:0000255" key="2">
    <source>
        <dbReference type="PROSITE-ProRule" id="PRU10011"/>
    </source>
</evidence>
<evidence type="ECO:0000269" key="3">
    <source>
    </source>
</evidence>
<evidence type="ECO:0000269" key="4">
    <source>
    </source>
</evidence>
<evidence type="ECO:0000305" key="5"/>
<evidence type="ECO:0000312" key="6">
    <source>
        <dbReference type="EMBL" id="AAO37984.1"/>
    </source>
</evidence>
<evidence type="ECO:0000312" key="7">
    <source>
        <dbReference type="EMBL" id="ABF99322.1"/>
    </source>
</evidence>
<evidence type="ECO:0000312" key="8">
    <source>
        <dbReference type="EMBL" id="BAF13454.1"/>
    </source>
</evidence>
<evidence type="ECO:0000312" key="9">
    <source>
        <dbReference type="EMBL" id="BAS86820.1"/>
    </source>
</evidence>
<gene>
    <name type="primary">GDH1</name>
    <name evidence="7" type="ordered locus">LOC_Os03g58040</name>
    <name evidence="8" type="ordered locus">Os03g0794500</name>
    <name evidence="6" type="ORF">OSJNBb0060J21.2</name>
    <name evidence="9" type="ORF">OSNPB_030794500</name>
</gene>
<protein>
    <recommendedName>
        <fullName evidence="5">Glutamate dehydrogenase 1, mitochondrial</fullName>
        <shortName>OsGDH1</shortName>
        <ecNumber evidence="2">1.4.1.3</ecNumber>
    </recommendedName>
</protein>
<proteinExistence type="evidence at transcript level"/>
<dbReference type="EC" id="1.4.1.3" evidence="2"/>
<dbReference type="EMBL" id="AY332470">
    <property type="protein sequence ID" value="AAQ01156.1"/>
    <property type="molecule type" value="mRNA"/>
</dbReference>
<dbReference type="EMBL" id="AB024962">
    <property type="protein sequence ID" value="BAE48296.1"/>
    <property type="molecule type" value="mRNA"/>
</dbReference>
<dbReference type="EMBL" id="AC090871">
    <property type="protein sequence ID" value="AAO37984.1"/>
    <property type="molecule type" value="Genomic_DNA"/>
</dbReference>
<dbReference type="EMBL" id="DP000009">
    <property type="protein sequence ID" value="ABF99322.1"/>
    <property type="molecule type" value="Genomic_DNA"/>
</dbReference>
<dbReference type="EMBL" id="DP000009">
    <property type="protein sequence ID" value="ABF99323.1"/>
    <property type="molecule type" value="Genomic_DNA"/>
</dbReference>
<dbReference type="EMBL" id="DP000009">
    <property type="protein sequence ID" value="ABF99324.1"/>
    <property type="molecule type" value="Genomic_DNA"/>
</dbReference>
<dbReference type="EMBL" id="AP008209">
    <property type="protein sequence ID" value="BAF13454.1"/>
    <property type="molecule type" value="Genomic_DNA"/>
</dbReference>
<dbReference type="EMBL" id="AP014959">
    <property type="protein sequence ID" value="BAS86820.1"/>
    <property type="molecule type" value="Genomic_DNA"/>
</dbReference>
<dbReference type="EMBL" id="CM000140">
    <property type="protein sequence ID" value="EAZ28893.1"/>
    <property type="status" value="ALT_SEQ"/>
    <property type="molecule type" value="Genomic_DNA"/>
</dbReference>
<dbReference type="RefSeq" id="XP_015631051.1">
    <property type="nucleotide sequence ID" value="XM_015775565.1"/>
</dbReference>
<dbReference type="RefSeq" id="XP_015631052.1">
    <property type="nucleotide sequence ID" value="XM_015775566.1"/>
</dbReference>
<dbReference type="SMR" id="Q852M0"/>
<dbReference type="FunCoup" id="Q852M0">
    <property type="interactions" value="1673"/>
</dbReference>
<dbReference type="STRING" id="39947.Q852M0"/>
<dbReference type="PaxDb" id="39947-Q852M0"/>
<dbReference type="EnsemblPlants" id="Os03t0794500-01">
    <property type="protein sequence ID" value="Os03t0794500-01"/>
    <property type="gene ID" value="Os03g0794500"/>
</dbReference>
<dbReference type="Gramene" id="Os03t0794500-01">
    <property type="protein sequence ID" value="Os03t0794500-01"/>
    <property type="gene ID" value="Os03g0794500"/>
</dbReference>
<dbReference type="KEGG" id="dosa:Os03g0794500"/>
<dbReference type="eggNOG" id="KOG2250">
    <property type="taxonomic scope" value="Eukaryota"/>
</dbReference>
<dbReference type="HOGENOM" id="CLU_025763_1_2_1"/>
<dbReference type="InParanoid" id="Q852M0"/>
<dbReference type="OMA" id="THSVCIN"/>
<dbReference type="OrthoDB" id="6718861at2759"/>
<dbReference type="BRENDA" id="1.4.1.2">
    <property type="organism ID" value="4460"/>
</dbReference>
<dbReference type="Proteomes" id="UP000000763">
    <property type="component" value="Chromosome 3"/>
</dbReference>
<dbReference type="Proteomes" id="UP000007752">
    <property type="component" value="Chromosome 3"/>
</dbReference>
<dbReference type="Proteomes" id="UP000059680">
    <property type="component" value="Chromosome 3"/>
</dbReference>
<dbReference type="GO" id="GO:0005739">
    <property type="term" value="C:mitochondrion"/>
    <property type="evidence" value="ECO:0000318"/>
    <property type="project" value="GO_Central"/>
</dbReference>
<dbReference type="GO" id="GO:0004352">
    <property type="term" value="F:glutamate dehydrogenase (NAD+) activity"/>
    <property type="evidence" value="ECO:0000318"/>
    <property type="project" value="GO_Central"/>
</dbReference>
<dbReference type="GO" id="GO:0004354">
    <property type="term" value="F:glutamate dehydrogenase (NADP+) activity"/>
    <property type="evidence" value="ECO:0007669"/>
    <property type="project" value="RHEA"/>
</dbReference>
<dbReference type="GO" id="GO:0006995">
    <property type="term" value="P:cellular response to nitrogen starvation"/>
    <property type="evidence" value="ECO:0000270"/>
    <property type="project" value="UniProtKB"/>
</dbReference>
<dbReference type="GO" id="GO:0006538">
    <property type="term" value="P:glutamate catabolic process"/>
    <property type="evidence" value="ECO:0000318"/>
    <property type="project" value="GO_Central"/>
</dbReference>
<dbReference type="GO" id="GO:1901698">
    <property type="term" value="P:response to nitrogen compound"/>
    <property type="evidence" value="ECO:0000270"/>
    <property type="project" value="UniProtKB"/>
</dbReference>
<dbReference type="CDD" id="cd01076">
    <property type="entry name" value="NAD_bind_1_Glu_DH"/>
    <property type="match status" value="1"/>
</dbReference>
<dbReference type="FunFam" id="3.40.50.10860:FF:000003">
    <property type="entry name" value="Glutamate dehydrogenase"/>
    <property type="match status" value="1"/>
</dbReference>
<dbReference type="FunFam" id="3.40.50.720:FF:000212">
    <property type="entry name" value="Glutamate dehydrogenase"/>
    <property type="match status" value="1"/>
</dbReference>
<dbReference type="Gene3D" id="3.40.50.10860">
    <property type="entry name" value="Leucine Dehydrogenase, chain A, domain 1"/>
    <property type="match status" value="1"/>
</dbReference>
<dbReference type="Gene3D" id="3.40.50.720">
    <property type="entry name" value="NAD(P)-binding Rossmann-like Domain"/>
    <property type="match status" value="1"/>
</dbReference>
<dbReference type="InterPro" id="IPR046346">
    <property type="entry name" value="Aminoacid_DH-like_N_sf"/>
</dbReference>
<dbReference type="InterPro" id="IPR006095">
    <property type="entry name" value="Glu/Leu/Phe/Val/Trp_DH"/>
</dbReference>
<dbReference type="InterPro" id="IPR006096">
    <property type="entry name" value="Glu/Leu/Phe/Val/Trp_DH_C"/>
</dbReference>
<dbReference type="InterPro" id="IPR006097">
    <property type="entry name" value="Glu/Leu/Phe/Val/Trp_DH_dimer"/>
</dbReference>
<dbReference type="InterPro" id="IPR033524">
    <property type="entry name" value="Glu/Leu/Phe/Val_DH_AS"/>
</dbReference>
<dbReference type="InterPro" id="IPR014362">
    <property type="entry name" value="Glu_DH"/>
</dbReference>
<dbReference type="InterPro" id="IPR036291">
    <property type="entry name" value="NAD(P)-bd_dom_sf"/>
</dbReference>
<dbReference type="InterPro" id="IPR033922">
    <property type="entry name" value="NAD_bind_Glu_DH"/>
</dbReference>
<dbReference type="PANTHER" id="PTHR11606">
    <property type="entry name" value="GLUTAMATE DEHYDROGENASE"/>
    <property type="match status" value="1"/>
</dbReference>
<dbReference type="PANTHER" id="PTHR11606:SF29">
    <property type="entry name" value="GLUTAMATE DEHYDROGENASE 3-RELATED"/>
    <property type="match status" value="1"/>
</dbReference>
<dbReference type="Pfam" id="PF00208">
    <property type="entry name" value="ELFV_dehydrog"/>
    <property type="match status" value="1"/>
</dbReference>
<dbReference type="Pfam" id="PF02812">
    <property type="entry name" value="ELFV_dehydrog_N"/>
    <property type="match status" value="1"/>
</dbReference>
<dbReference type="PIRSF" id="PIRSF000185">
    <property type="entry name" value="Glu_DH"/>
    <property type="match status" value="1"/>
</dbReference>
<dbReference type="PRINTS" id="PR00082">
    <property type="entry name" value="GLFDHDRGNASE"/>
</dbReference>
<dbReference type="SMART" id="SM00839">
    <property type="entry name" value="ELFV_dehydrog"/>
    <property type="match status" value="1"/>
</dbReference>
<dbReference type="SUPFAM" id="SSF53223">
    <property type="entry name" value="Aminoacid dehydrogenase-like, N-terminal domain"/>
    <property type="match status" value="1"/>
</dbReference>
<dbReference type="SUPFAM" id="SSF51735">
    <property type="entry name" value="NAD(P)-binding Rossmann-fold domains"/>
    <property type="match status" value="1"/>
</dbReference>
<dbReference type="PROSITE" id="PS00074">
    <property type="entry name" value="GLFV_DEHYDROGENASE"/>
    <property type="match status" value="1"/>
</dbReference>
<keyword id="KW-0496">Mitochondrion</keyword>
<keyword id="KW-0520">NAD</keyword>
<keyword id="KW-0521">NADP</keyword>
<keyword id="KW-0560">Oxidoreductase</keyword>
<keyword id="KW-1185">Reference proteome</keyword>
<keyword id="KW-0809">Transit peptide</keyword>